<reference key="1">
    <citation type="submission" date="2009-11" db="EMBL/GenBank/DDBJ databases">
        <title>The complete chromosome 1 of Sphaerobacter thermophilus DSM 20745.</title>
        <authorList>
            <person name="Lucas S."/>
            <person name="Copeland A."/>
            <person name="Lapidus A."/>
            <person name="Glavina del Rio T."/>
            <person name="Dalin E."/>
            <person name="Tice H."/>
            <person name="Bruce D."/>
            <person name="Goodwin L."/>
            <person name="Pitluck S."/>
            <person name="Kyrpides N."/>
            <person name="Mavromatis K."/>
            <person name="Ivanova N."/>
            <person name="Mikhailova N."/>
            <person name="LaButti K.M."/>
            <person name="Clum A."/>
            <person name="Sun H.I."/>
            <person name="Brettin T."/>
            <person name="Detter J.C."/>
            <person name="Han C."/>
            <person name="Larimer F."/>
            <person name="Land M."/>
            <person name="Hauser L."/>
            <person name="Markowitz V."/>
            <person name="Cheng J.F."/>
            <person name="Hugenholtz P."/>
            <person name="Woyke T."/>
            <person name="Wu D."/>
            <person name="Steenblock K."/>
            <person name="Schneider S."/>
            <person name="Pukall R."/>
            <person name="Goeker M."/>
            <person name="Klenk H.P."/>
            <person name="Eisen J.A."/>
        </authorList>
    </citation>
    <scope>NUCLEOTIDE SEQUENCE [LARGE SCALE GENOMIC DNA]</scope>
    <source>
        <strain>ATCC 49802 / DSM 20745 / KCCM 41009 / NCIMB 13125 / S 6022</strain>
    </source>
</reference>
<comment type="function">
    <text evidence="1">Acts as a processive, ATP-dependent zinc metallopeptidase for both cytoplasmic and membrane proteins. Plays a role in the quality control of integral membrane proteins.</text>
</comment>
<comment type="cofactor">
    <cofactor evidence="1">
        <name>Zn(2+)</name>
        <dbReference type="ChEBI" id="CHEBI:29105"/>
    </cofactor>
    <text evidence="1">Binds 1 zinc ion per subunit.</text>
</comment>
<comment type="subunit">
    <text evidence="1">Homohexamer.</text>
</comment>
<comment type="subcellular location">
    <subcellularLocation>
        <location evidence="1">Cell membrane</location>
        <topology evidence="1">Multi-pass membrane protein</topology>
        <orientation evidence="1">Cytoplasmic side</orientation>
    </subcellularLocation>
</comment>
<comment type="similarity">
    <text evidence="1">In the central section; belongs to the AAA ATPase family.</text>
</comment>
<comment type="similarity">
    <text evidence="1">In the C-terminal section; belongs to the peptidase M41 family.</text>
</comment>
<gene>
    <name evidence="1" type="primary">ftsH1</name>
    <name type="ordered locus">Sthe_0777</name>
</gene>
<name>FTSH1_SPHTD</name>
<protein>
    <recommendedName>
        <fullName evidence="1">ATP-dependent zinc metalloprotease FtsH 1</fullName>
        <ecNumber evidence="1">3.4.24.-</ecNumber>
    </recommendedName>
</protein>
<organism>
    <name type="scientific">Sphaerobacter thermophilus (strain ATCC 49802 / DSM 20745 / KCCM 41009 / NCIMB 13125 / S 6022)</name>
    <dbReference type="NCBI Taxonomy" id="479434"/>
    <lineage>
        <taxon>Bacteria</taxon>
        <taxon>Pseudomonadati</taxon>
        <taxon>Thermomicrobiota</taxon>
        <taxon>Thermomicrobia</taxon>
        <taxon>Sphaerobacterales</taxon>
        <taxon>Sphaerobacterineae</taxon>
        <taxon>Sphaerobacteraceae</taxon>
        <taxon>Sphaerobacter</taxon>
    </lineage>
</organism>
<feature type="chain" id="PRO_0000400395" description="ATP-dependent zinc metalloprotease FtsH 1">
    <location>
        <begin position="1"/>
        <end position="653"/>
    </location>
</feature>
<feature type="topological domain" description="Cytoplasmic" evidence="1">
    <location>
        <begin position="1"/>
        <end position="8"/>
    </location>
</feature>
<feature type="transmembrane region" description="Helical" evidence="1">
    <location>
        <begin position="9"/>
        <end position="29"/>
    </location>
</feature>
<feature type="topological domain" description="Extracellular" evidence="1">
    <location>
        <begin position="30"/>
        <end position="110"/>
    </location>
</feature>
<feature type="transmembrane region" description="Helical" evidence="1">
    <location>
        <begin position="111"/>
        <end position="131"/>
    </location>
</feature>
<feature type="topological domain" description="Cytoplasmic" evidence="1">
    <location>
        <begin position="132"/>
        <end position="653"/>
    </location>
</feature>
<feature type="region of interest" description="Disordered" evidence="2">
    <location>
        <begin position="604"/>
        <end position="653"/>
    </location>
</feature>
<feature type="compositionally biased region" description="Basic and acidic residues" evidence="2">
    <location>
        <begin position="624"/>
        <end position="637"/>
    </location>
</feature>
<feature type="compositionally biased region" description="Pro residues" evidence="2">
    <location>
        <begin position="638"/>
        <end position="653"/>
    </location>
</feature>
<feature type="active site" evidence="1">
    <location>
        <position position="426"/>
    </location>
</feature>
<feature type="binding site" evidence="1">
    <location>
        <begin position="203"/>
        <end position="210"/>
    </location>
    <ligand>
        <name>ATP</name>
        <dbReference type="ChEBI" id="CHEBI:30616"/>
    </ligand>
</feature>
<feature type="binding site" evidence="1">
    <location>
        <position position="425"/>
    </location>
    <ligand>
        <name>Zn(2+)</name>
        <dbReference type="ChEBI" id="CHEBI:29105"/>
        <note>catalytic</note>
    </ligand>
</feature>
<feature type="binding site" evidence="1">
    <location>
        <position position="429"/>
    </location>
    <ligand>
        <name>Zn(2+)</name>
        <dbReference type="ChEBI" id="CHEBI:29105"/>
        <note>catalytic</note>
    </ligand>
</feature>
<feature type="binding site" evidence="1">
    <location>
        <position position="501"/>
    </location>
    <ligand>
        <name>Zn(2+)</name>
        <dbReference type="ChEBI" id="CHEBI:29105"/>
        <note>catalytic</note>
    </ligand>
</feature>
<proteinExistence type="inferred from homology"/>
<keyword id="KW-0067">ATP-binding</keyword>
<keyword id="KW-1003">Cell membrane</keyword>
<keyword id="KW-0378">Hydrolase</keyword>
<keyword id="KW-0472">Membrane</keyword>
<keyword id="KW-0479">Metal-binding</keyword>
<keyword id="KW-0482">Metalloprotease</keyword>
<keyword id="KW-0547">Nucleotide-binding</keyword>
<keyword id="KW-0645">Protease</keyword>
<keyword id="KW-1185">Reference proteome</keyword>
<keyword id="KW-0812">Transmembrane</keyword>
<keyword id="KW-1133">Transmembrane helix</keyword>
<keyword id="KW-0862">Zinc</keyword>
<dbReference type="EC" id="3.4.24.-" evidence="1"/>
<dbReference type="EMBL" id="CP001823">
    <property type="protein sequence ID" value="ACZ38214.1"/>
    <property type="molecule type" value="Genomic_DNA"/>
</dbReference>
<dbReference type="RefSeq" id="WP_012871261.1">
    <property type="nucleotide sequence ID" value="NC_013523.1"/>
</dbReference>
<dbReference type="SMR" id="D1C1U7"/>
<dbReference type="FunCoup" id="D1C1U7">
    <property type="interactions" value="496"/>
</dbReference>
<dbReference type="STRING" id="479434.Sthe_0777"/>
<dbReference type="KEGG" id="sti:Sthe_0777"/>
<dbReference type="eggNOG" id="COG0465">
    <property type="taxonomic scope" value="Bacteria"/>
</dbReference>
<dbReference type="HOGENOM" id="CLU_000688_16_2_0"/>
<dbReference type="InParanoid" id="D1C1U7"/>
<dbReference type="OrthoDB" id="9809379at2"/>
<dbReference type="Proteomes" id="UP000002027">
    <property type="component" value="Chromosome 1"/>
</dbReference>
<dbReference type="GO" id="GO:0005886">
    <property type="term" value="C:plasma membrane"/>
    <property type="evidence" value="ECO:0007669"/>
    <property type="project" value="UniProtKB-SubCell"/>
</dbReference>
<dbReference type="GO" id="GO:0005524">
    <property type="term" value="F:ATP binding"/>
    <property type="evidence" value="ECO:0007669"/>
    <property type="project" value="UniProtKB-UniRule"/>
</dbReference>
<dbReference type="GO" id="GO:0016887">
    <property type="term" value="F:ATP hydrolysis activity"/>
    <property type="evidence" value="ECO:0007669"/>
    <property type="project" value="UniProtKB-UniRule"/>
</dbReference>
<dbReference type="GO" id="GO:0004176">
    <property type="term" value="F:ATP-dependent peptidase activity"/>
    <property type="evidence" value="ECO:0007669"/>
    <property type="project" value="InterPro"/>
</dbReference>
<dbReference type="GO" id="GO:0004222">
    <property type="term" value="F:metalloendopeptidase activity"/>
    <property type="evidence" value="ECO:0007669"/>
    <property type="project" value="InterPro"/>
</dbReference>
<dbReference type="GO" id="GO:0008270">
    <property type="term" value="F:zinc ion binding"/>
    <property type="evidence" value="ECO:0007669"/>
    <property type="project" value="UniProtKB-UniRule"/>
</dbReference>
<dbReference type="GO" id="GO:0030163">
    <property type="term" value="P:protein catabolic process"/>
    <property type="evidence" value="ECO:0007669"/>
    <property type="project" value="UniProtKB-UniRule"/>
</dbReference>
<dbReference type="GO" id="GO:0006508">
    <property type="term" value="P:proteolysis"/>
    <property type="evidence" value="ECO:0007669"/>
    <property type="project" value="UniProtKB-KW"/>
</dbReference>
<dbReference type="CDD" id="cd19501">
    <property type="entry name" value="RecA-like_FtsH"/>
    <property type="match status" value="1"/>
</dbReference>
<dbReference type="FunFam" id="1.10.8.60:FF:000001">
    <property type="entry name" value="ATP-dependent zinc metalloprotease FtsH"/>
    <property type="match status" value="1"/>
</dbReference>
<dbReference type="FunFam" id="1.20.58.760:FF:000001">
    <property type="entry name" value="ATP-dependent zinc metalloprotease FtsH"/>
    <property type="match status" value="1"/>
</dbReference>
<dbReference type="FunFam" id="3.40.50.300:FF:000001">
    <property type="entry name" value="ATP-dependent zinc metalloprotease FtsH"/>
    <property type="match status" value="1"/>
</dbReference>
<dbReference type="Gene3D" id="1.10.8.60">
    <property type="match status" value="1"/>
</dbReference>
<dbReference type="Gene3D" id="3.40.50.300">
    <property type="entry name" value="P-loop containing nucleotide triphosphate hydrolases"/>
    <property type="match status" value="1"/>
</dbReference>
<dbReference type="Gene3D" id="1.20.58.760">
    <property type="entry name" value="Peptidase M41"/>
    <property type="match status" value="1"/>
</dbReference>
<dbReference type="HAMAP" id="MF_01458">
    <property type="entry name" value="FtsH"/>
    <property type="match status" value="1"/>
</dbReference>
<dbReference type="InterPro" id="IPR003593">
    <property type="entry name" value="AAA+_ATPase"/>
</dbReference>
<dbReference type="InterPro" id="IPR041569">
    <property type="entry name" value="AAA_lid_3"/>
</dbReference>
<dbReference type="InterPro" id="IPR003959">
    <property type="entry name" value="ATPase_AAA_core"/>
</dbReference>
<dbReference type="InterPro" id="IPR003960">
    <property type="entry name" value="ATPase_AAA_CS"/>
</dbReference>
<dbReference type="InterPro" id="IPR005936">
    <property type="entry name" value="FtsH"/>
</dbReference>
<dbReference type="InterPro" id="IPR027417">
    <property type="entry name" value="P-loop_NTPase"/>
</dbReference>
<dbReference type="InterPro" id="IPR000642">
    <property type="entry name" value="Peptidase_M41"/>
</dbReference>
<dbReference type="InterPro" id="IPR037219">
    <property type="entry name" value="Peptidase_M41-like"/>
</dbReference>
<dbReference type="NCBIfam" id="TIGR01241">
    <property type="entry name" value="FtsH_fam"/>
    <property type="match status" value="1"/>
</dbReference>
<dbReference type="PANTHER" id="PTHR23076:SF97">
    <property type="entry name" value="ATP-DEPENDENT ZINC METALLOPROTEASE YME1L1"/>
    <property type="match status" value="1"/>
</dbReference>
<dbReference type="PANTHER" id="PTHR23076">
    <property type="entry name" value="METALLOPROTEASE M41 FTSH"/>
    <property type="match status" value="1"/>
</dbReference>
<dbReference type="Pfam" id="PF00004">
    <property type="entry name" value="AAA"/>
    <property type="match status" value="1"/>
</dbReference>
<dbReference type="Pfam" id="PF17862">
    <property type="entry name" value="AAA_lid_3"/>
    <property type="match status" value="1"/>
</dbReference>
<dbReference type="Pfam" id="PF01434">
    <property type="entry name" value="Peptidase_M41"/>
    <property type="match status" value="1"/>
</dbReference>
<dbReference type="SMART" id="SM00382">
    <property type="entry name" value="AAA"/>
    <property type="match status" value="1"/>
</dbReference>
<dbReference type="SUPFAM" id="SSF140990">
    <property type="entry name" value="FtsH protease domain-like"/>
    <property type="match status" value="1"/>
</dbReference>
<dbReference type="SUPFAM" id="SSF52540">
    <property type="entry name" value="P-loop containing nucleoside triphosphate hydrolases"/>
    <property type="match status" value="1"/>
</dbReference>
<dbReference type="PROSITE" id="PS00674">
    <property type="entry name" value="AAA"/>
    <property type="match status" value="1"/>
</dbReference>
<evidence type="ECO:0000255" key="1">
    <source>
        <dbReference type="HAMAP-Rule" id="MF_01458"/>
    </source>
</evidence>
<evidence type="ECO:0000256" key="2">
    <source>
        <dbReference type="SAM" id="MobiDB-lite"/>
    </source>
</evidence>
<sequence>MAENKWLRNGFVWIVLIIAVVALWVTFMKDGGSAREENFADVAADIRQGRVARIVMTEGSNDIQVQYIGEEEPRSSRLPPDVNIYQALEQYGLSGADVEIRVNPASQWGNWLSALTFILPTLFLIGIVIFMMRQAQGTNNQAISFGKSRARMFTGNKPTVTFADVAGVEEAKEELVEVVEFLKYPDKFASLGARIPRGVLLVGPPGTGKTLLSRAVAGEAGVPFFSISGSEFVEMFVGVGASRVRDLFDQAKRNAPCIVFIDEIDAVGRQRGAGLGGSHDEREQTLNQILVEMDGFDSTTNVIVIAATNRPDVLDPALLRPGRFDRQVVLDRPDIAGRRAILEVHSRGKPLESDVDLEELARQTPGFSGADLENLVNEAAILAARRNKKTIGRRELTEAIDRVIAGPERKSRVLSEREKLMTAYHEAGHALVARMLPHADPVHKVSIVARGMMGGYTRVLPEEDRFFWTKKQFEDQLAVFMGGHVAEELVFQEISTGAANDIERATNLARRMVTEYGMSKTLGPLAFGRKEELVFLGREINEQRNYSDEVAYMIDQEIRSLIDTAYKRAHEILSQHMDKLEAIAMLLMEAETIDGHELEALFDEPRPRPQLVGPPVTRPAALAHKTEEADRGGERSPHPQPHPSPTMRPQPAS</sequence>
<accession>D1C1U7</accession>